<feature type="signal peptide" evidence="2">
    <location>
        <begin position="1"/>
        <end position="24"/>
    </location>
</feature>
<feature type="chain" id="PRO_0000044633" description="Insulin growth factor-like family member 1">
    <location>
        <begin position="25"/>
        <end position="110"/>
    </location>
</feature>
<feature type="glycosylation site" description="N-linked (GlcNAc...) asparagine" evidence="1">
    <location>
        <position position="71"/>
    </location>
</feature>
<keyword id="KW-0903">Direct protein sequencing</keyword>
<keyword id="KW-1015">Disulfide bond</keyword>
<keyword id="KW-0325">Glycoprotein</keyword>
<keyword id="KW-1267">Proteomics identification</keyword>
<keyword id="KW-1185">Reference proteome</keyword>
<keyword id="KW-0964">Secreted</keyword>
<keyword id="KW-0732">Signal</keyword>
<reference key="1">
    <citation type="journal article" date="2006" name="Genomics">
        <title>IGFL: a secreted family with conserved cysteine residues and similarities to the IGF superfamily.</title>
        <authorList>
            <person name="Emtage P."/>
            <person name="Vatta P."/>
            <person name="Arterburn M."/>
            <person name="Muller M.W."/>
            <person name="Park E."/>
            <person name="Boyle B."/>
            <person name="Hazell S."/>
            <person name="Polizotto R."/>
            <person name="Funk W.D."/>
            <person name="Tang Y.T."/>
        </authorList>
    </citation>
    <scope>NUCLEOTIDE SEQUENCE [MRNA]</scope>
    <scope>SUBCELLULAR LOCATION</scope>
    <scope>TISSUE SPECIFICITY</scope>
</reference>
<reference key="2">
    <citation type="journal article" date="2003" name="Genome Res.">
        <title>The secreted protein discovery initiative (SPDI), a large-scale effort to identify novel human secreted and transmembrane proteins: a bioinformatics assessment.</title>
        <authorList>
            <person name="Clark H.F."/>
            <person name="Gurney A.L."/>
            <person name="Abaya E."/>
            <person name="Baker K."/>
            <person name="Baldwin D.T."/>
            <person name="Brush J."/>
            <person name="Chen J."/>
            <person name="Chow B."/>
            <person name="Chui C."/>
            <person name="Crowley C."/>
            <person name="Currell B."/>
            <person name="Deuel B."/>
            <person name="Dowd P."/>
            <person name="Eaton D."/>
            <person name="Foster J.S."/>
            <person name="Grimaldi C."/>
            <person name="Gu Q."/>
            <person name="Hass P.E."/>
            <person name="Heldens S."/>
            <person name="Huang A."/>
            <person name="Kim H.S."/>
            <person name="Klimowski L."/>
            <person name="Jin Y."/>
            <person name="Johnson S."/>
            <person name="Lee J."/>
            <person name="Lewis L."/>
            <person name="Liao D."/>
            <person name="Mark M.R."/>
            <person name="Robbie E."/>
            <person name="Sanchez C."/>
            <person name="Schoenfeld J."/>
            <person name="Seshagiri S."/>
            <person name="Simmons L."/>
            <person name="Singh J."/>
            <person name="Smith V."/>
            <person name="Stinson J."/>
            <person name="Vagts A."/>
            <person name="Vandlen R.L."/>
            <person name="Watanabe C."/>
            <person name="Wieand D."/>
            <person name="Woods K."/>
            <person name="Xie M.-H."/>
            <person name="Yansura D.G."/>
            <person name="Yi S."/>
            <person name="Yu G."/>
            <person name="Yuan J."/>
            <person name="Zhang M."/>
            <person name="Zhang Z."/>
            <person name="Goddard A.D."/>
            <person name="Wood W.I."/>
            <person name="Godowski P.J."/>
            <person name="Gray A.M."/>
        </authorList>
    </citation>
    <scope>NUCLEOTIDE SEQUENCE [LARGE SCALE MRNA]</scope>
</reference>
<reference key="3">
    <citation type="journal article" date="2004" name="Nature">
        <title>The DNA sequence and biology of human chromosome 19.</title>
        <authorList>
            <person name="Grimwood J."/>
            <person name="Gordon L.A."/>
            <person name="Olsen A.S."/>
            <person name="Terry A."/>
            <person name="Schmutz J."/>
            <person name="Lamerdin J.E."/>
            <person name="Hellsten U."/>
            <person name="Goodstein D."/>
            <person name="Couronne O."/>
            <person name="Tran-Gyamfi M."/>
            <person name="Aerts A."/>
            <person name="Altherr M."/>
            <person name="Ashworth L."/>
            <person name="Bajorek E."/>
            <person name="Black S."/>
            <person name="Branscomb E."/>
            <person name="Caenepeel S."/>
            <person name="Carrano A.V."/>
            <person name="Caoile C."/>
            <person name="Chan Y.M."/>
            <person name="Christensen M."/>
            <person name="Cleland C.A."/>
            <person name="Copeland A."/>
            <person name="Dalin E."/>
            <person name="Dehal P."/>
            <person name="Denys M."/>
            <person name="Detter J.C."/>
            <person name="Escobar J."/>
            <person name="Flowers D."/>
            <person name="Fotopulos D."/>
            <person name="Garcia C."/>
            <person name="Georgescu A.M."/>
            <person name="Glavina T."/>
            <person name="Gomez M."/>
            <person name="Gonzales E."/>
            <person name="Groza M."/>
            <person name="Hammon N."/>
            <person name="Hawkins T."/>
            <person name="Haydu L."/>
            <person name="Ho I."/>
            <person name="Huang W."/>
            <person name="Israni S."/>
            <person name="Jett J."/>
            <person name="Kadner K."/>
            <person name="Kimball H."/>
            <person name="Kobayashi A."/>
            <person name="Larionov V."/>
            <person name="Leem S.-H."/>
            <person name="Lopez F."/>
            <person name="Lou Y."/>
            <person name="Lowry S."/>
            <person name="Malfatti S."/>
            <person name="Martinez D."/>
            <person name="McCready P.M."/>
            <person name="Medina C."/>
            <person name="Morgan J."/>
            <person name="Nelson K."/>
            <person name="Nolan M."/>
            <person name="Ovcharenko I."/>
            <person name="Pitluck S."/>
            <person name="Pollard M."/>
            <person name="Popkie A.P."/>
            <person name="Predki P."/>
            <person name="Quan G."/>
            <person name="Ramirez L."/>
            <person name="Rash S."/>
            <person name="Retterer J."/>
            <person name="Rodriguez A."/>
            <person name="Rogers S."/>
            <person name="Salamov A."/>
            <person name="Salazar A."/>
            <person name="She X."/>
            <person name="Smith D."/>
            <person name="Slezak T."/>
            <person name="Solovyev V."/>
            <person name="Thayer N."/>
            <person name="Tice H."/>
            <person name="Tsai M."/>
            <person name="Ustaszewska A."/>
            <person name="Vo N."/>
            <person name="Wagner M."/>
            <person name="Wheeler J."/>
            <person name="Wu K."/>
            <person name="Xie G."/>
            <person name="Yang J."/>
            <person name="Dubchak I."/>
            <person name="Furey T.S."/>
            <person name="DeJong P."/>
            <person name="Dickson M."/>
            <person name="Gordon D."/>
            <person name="Eichler E.E."/>
            <person name="Pennacchio L.A."/>
            <person name="Richardson P."/>
            <person name="Stubbs L."/>
            <person name="Rokhsar D.S."/>
            <person name="Myers R.M."/>
            <person name="Rubin E.M."/>
            <person name="Lucas S.M."/>
        </authorList>
    </citation>
    <scope>NUCLEOTIDE SEQUENCE [LARGE SCALE GENOMIC DNA]</scope>
</reference>
<reference key="4">
    <citation type="journal article" date="2004" name="Protein Sci.">
        <title>Signal peptide prediction based on analysis of experimentally verified cleavage sites.</title>
        <authorList>
            <person name="Zhang Z."/>
            <person name="Henzel W.J."/>
        </authorList>
    </citation>
    <scope>PROTEIN SEQUENCE OF 25-39</scope>
</reference>
<reference key="5">
    <citation type="journal article" date="2011" name="J. Biol. Chem.">
        <title>Murine IGFL and human IGFL1 are induced in inflammatory skin conditions and bind to a novel TNF receptor family member, IGFLR1.</title>
        <authorList>
            <person name="Lobito A.A."/>
            <person name="Ramani S.R."/>
            <person name="Tom I."/>
            <person name="Bazan J.F."/>
            <person name="Luis E."/>
            <person name="Fairbrother W.J."/>
            <person name="Ouyang W."/>
            <person name="Gonzalez L.C."/>
        </authorList>
    </citation>
    <scope>FUNCTION</scope>
    <scope>SUBCELLULAR LOCATION</scope>
    <scope>HOMODIMERIZATION</scope>
    <scope>DISULFIDE BONDS</scope>
</reference>
<comment type="function">
    <text evidence="4">Probable ligand of the IGFLR1 cell membrane receptor.</text>
</comment>
<comment type="subunit">
    <text evidence="4">Homodimer; disulfide-linked.</text>
</comment>
<comment type="interaction">
    <interactant intactId="EBI-3870426">
        <id>Q6UW32</id>
    </interactant>
    <interactant intactId="EBI-740785">
        <id>P49639</id>
        <label>HOXA1</label>
    </interactant>
    <organismsDiffer>false</organismsDiffer>
    <experiments>3</experiments>
</comment>
<comment type="interaction">
    <interactant intactId="EBI-3870426">
        <id>Q6UW32</id>
    </interactant>
    <interactant intactId="EBI-3870439">
        <id>Q9H665</id>
        <label>IGFLR1</label>
    </interactant>
    <organismsDiffer>false</organismsDiffer>
    <experiments>5</experiments>
</comment>
<comment type="interaction">
    <interactant intactId="EBI-3870426">
        <id>Q6UW32</id>
    </interactant>
    <interactant intactId="EBI-17236143">
        <id>Q12837</id>
        <label>POU4F2</label>
    </interactant>
    <organismsDiffer>false</organismsDiffer>
    <experiments>3</experiments>
</comment>
<comment type="subcellular location">
    <subcellularLocation>
        <location evidence="3 4">Secreted</location>
    </subcellularLocation>
</comment>
<comment type="tissue specificity">
    <text evidence="3">Detected in ovary and spinal cord.</text>
</comment>
<comment type="similarity">
    <text evidence="5">Belongs to the IGFL family.</text>
</comment>
<evidence type="ECO:0000255" key="1"/>
<evidence type="ECO:0000269" key="2">
    <source>
    </source>
</evidence>
<evidence type="ECO:0000269" key="3">
    <source>
    </source>
</evidence>
<evidence type="ECO:0000269" key="4">
    <source>
    </source>
</evidence>
<evidence type="ECO:0000305" key="5"/>
<protein>
    <recommendedName>
        <fullName>Insulin growth factor-like family member 1</fullName>
    </recommendedName>
</protein>
<sequence>MAPRGCIVAVFAIFCISRLLCSHGAPVAPMTPYLMLCQPHKRCGDKFYDPLQHCCYDDAVVPLARTQTCGNCTFRVCFEQCCPWTFMVKLINQNCDSARTSDDRLCRSVS</sequence>
<accession>Q6UW32</accession>
<gene>
    <name type="primary">IGFL1</name>
    <name type="ORF">UNQ644/PRO1274</name>
</gene>
<dbReference type="EMBL" id="AY672111">
    <property type="protein sequence ID" value="AAT77785.1"/>
    <property type="molecule type" value="mRNA"/>
</dbReference>
<dbReference type="EMBL" id="AY359013">
    <property type="protein sequence ID" value="AAQ89372.1"/>
    <property type="molecule type" value="mRNA"/>
</dbReference>
<dbReference type="EMBL" id="AC006262">
    <property type="status" value="NOT_ANNOTATED_CDS"/>
    <property type="molecule type" value="Genomic_DNA"/>
</dbReference>
<dbReference type="CCDS" id="CCDS46123.1"/>
<dbReference type="RefSeq" id="NP_940943.1">
    <property type="nucleotide sequence ID" value="NM_198541.2"/>
</dbReference>
<dbReference type="BioGRID" id="131937">
    <property type="interactions" value="83"/>
</dbReference>
<dbReference type="FunCoup" id="Q6UW32">
    <property type="interactions" value="18"/>
</dbReference>
<dbReference type="IntAct" id="Q6UW32">
    <property type="interactions" value="11"/>
</dbReference>
<dbReference type="STRING" id="9606.ENSP00000415823"/>
<dbReference type="GlyCosmos" id="Q6UW32">
    <property type="glycosylation" value="1 site, No reported glycans"/>
</dbReference>
<dbReference type="GlyGen" id="Q6UW32">
    <property type="glycosylation" value="1 site"/>
</dbReference>
<dbReference type="iPTMnet" id="Q6UW32"/>
<dbReference type="BioMuta" id="IGFL1"/>
<dbReference type="DMDM" id="74738058"/>
<dbReference type="MassIVE" id="Q6UW32"/>
<dbReference type="PaxDb" id="9606-ENSP00000415823"/>
<dbReference type="PeptideAtlas" id="Q6UW32"/>
<dbReference type="ProteomicsDB" id="67444"/>
<dbReference type="Antibodypedia" id="2718">
    <property type="antibodies" value="43 antibodies from 16 providers"/>
</dbReference>
<dbReference type="DNASU" id="374918"/>
<dbReference type="Ensembl" id="ENST00000437936.2">
    <property type="protein sequence ID" value="ENSP00000415823.1"/>
    <property type="gene ID" value="ENSG00000188293.6"/>
</dbReference>
<dbReference type="GeneID" id="374918"/>
<dbReference type="KEGG" id="hsa:374918"/>
<dbReference type="MANE-Select" id="ENST00000437936.2">
    <property type="protein sequence ID" value="ENSP00000415823.1"/>
    <property type="RefSeq nucleotide sequence ID" value="NM_198541.2"/>
    <property type="RefSeq protein sequence ID" value="NP_940943.1"/>
</dbReference>
<dbReference type="UCSC" id="uc002pee.3">
    <property type="organism name" value="human"/>
</dbReference>
<dbReference type="AGR" id="HGNC:24093"/>
<dbReference type="CTD" id="374918"/>
<dbReference type="DisGeNET" id="374918"/>
<dbReference type="GeneCards" id="IGFL1"/>
<dbReference type="HGNC" id="HGNC:24093">
    <property type="gene designation" value="IGFL1"/>
</dbReference>
<dbReference type="HPA" id="ENSG00000188293">
    <property type="expression patterns" value="Group enriched (esophagus, salivary gland, vagina)"/>
</dbReference>
<dbReference type="MIM" id="610544">
    <property type="type" value="gene"/>
</dbReference>
<dbReference type="neXtProt" id="NX_Q6UW32"/>
<dbReference type="OpenTargets" id="ENSG00000188293"/>
<dbReference type="PharmGKB" id="PA147357921"/>
<dbReference type="VEuPathDB" id="HostDB:ENSG00000188293"/>
<dbReference type="eggNOG" id="ENOG502TJ2N">
    <property type="taxonomic scope" value="Eukaryota"/>
</dbReference>
<dbReference type="GeneTree" id="ENSGT00390000009557"/>
<dbReference type="HOGENOM" id="CLU_148773_1_1_1"/>
<dbReference type="InParanoid" id="Q6UW32"/>
<dbReference type="OMA" id="FERCCSW"/>
<dbReference type="OrthoDB" id="9834561at2759"/>
<dbReference type="PAN-GO" id="Q6UW32">
    <property type="GO annotations" value="2 GO annotations based on evolutionary models"/>
</dbReference>
<dbReference type="PhylomeDB" id="Q6UW32"/>
<dbReference type="TreeFam" id="TF343427"/>
<dbReference type="PathwayCommons" id="Q6UW32"/>
<dbReference type="SignaLink" id="Q6UW32"/>
<dbReference type="BioGRID-ORCS" id="374918">
    <property type="hits" value="18 hits in 1140 CRISPR screens"/>
</dbReference>
<dbReference type="GenomeRNAi" id="374918"/>
<dbReference type="Pharos" id="Q6UW32">
    <property type="development level" value="Tdark"/>
</dbReference>
<dbReference type="PRO" id="PR:Q6UW32"/>
<dbReference type="Proteomes" id="UP000005640">
    <property type="component" value="Chromosome 19"/>
</dbReference>
<dbReference type="RNAct" id="Q6UW32">
    <property type="molecule type" value="protein"/>
</dbReference>
<dbReference type="Bgee" id="ENSG00000188293">
    <property type="expression patterns" value="Expressed in lower esophagus mucosa and 65 other cell types or tissues"/>
</dbReference>
<dbReference type="GO" id="GO:0005615">
    <property type="term" value="C:extracellular space"/>
    <property type="evidence" value="ECO:0000314"/>
    <property type="project" value="UniProtKB"/>
</dbReference>
<dbReference type="GO" id="GO:0005102">
    <property type="term" value="F:signaling receptor binding"/>
    <property type="evidence" value="ECO:0000318"/>
    <property type="project" value="GO_Central"/>
</dbReference>
<dbReference type="InterPro" id="IPR032744">
    <property type="entry name" value="IGFL"/>
</dbReference>
<dbReference type="PANTHER" id="PTHR34827:SF2">
    <property type="entry name" value="INSULIN GROWTH FACTOR-LIKE FAMILY MEMBER 1"/>
    <property type="match status" value="1"/>
</dbReference>
<dbReference type="PANTHER" id="PTHR34827">
    <property type="entry name" value="INSULIN GROWTH FACTOR-LIKE FAMILY MEMBER 3-RELATED"/>
    <property type="match status" value="1"/>
</dbReference>
<dbReference type="Pfam" id="PF14653">
    <property type="entry name" value="IGFL"/>
    <property type="match status" value="1"/>
</dbReference>
<organism>
    <name type="scientific">Homo sapiens</name>
    <name type="common">Human</name>
    <dbReference type="NCBI Taxonomy" id="9606"/>
    <lineage>
        <taxon>Eukaryota</taxon>
        <taxon>Metazoa</taxon>
        <taxon>Chordata</taxon>
        <taxon>Craniata</taxon>
        <taxon>Vertebrata</taxon>
        <taxon>Euteleostomi</taxon>
        <taxon>Mammalia</taxon>
        <taxon>Eutheria</taxon>
        <taxon>Euarchontoglires</taxon>
        <taxon>Primates</taxon>
        <taxon>Haplorrhini</taxon>
        <taxon>Catarrhini</taxon>
        <taxon>Hominidae</taxon>
        <taxon>Homo</taxon>
    </lineage>
</organism>
<proteinExistence type="evidence at protein level"/>
<name>IGFL1_HUMAN</name>